<comment type="catalytic activity">
    <reaction>
        <text>betaine aldehyde + NAD(+) + H2O = glycine betaine + NADH + 2 H(+)</text>
        <dbReference type="Rhea" id="RHEA:15305"/>
        <dbReference type="ChEBI" id="CHEBI:15377"/>
        <dbReference type="ChEBI" id="CHEBI:15378"/>
        <dbReference type="ChEBI" id="CHEBI:15710"/>
        <dbReference type="ChEBI" id="CHEBI:17750"/>
        <dbReference type="ChEBI" id="CHEBI:57540"/>
        <dbReference type="ChEBI" id="CHEBI:57945"/>
        <dbReference type="EC" id="1.2.1.8"/>
    </reaction>
</comment>
<comment type="pathway">
    <text>Amine and polyamine biosynthesis; betaine biosynthesis via choline pathway; betaine from betaine aldehyde: step 1/1.</text>
</comment>
<comment type="subunit">
    <text evidence="1">Homodimer.</text>
</comment>
<comment type="subcellular location">
    <subcellularLocation>
        <location evidence="5">Peroxisome</location>
    </subcellularLocation>
</comment>
<comment type="similarity">
    <text evidence="5">Belongs to the aldehyde dehydrogenase family.</text>
</comment>
<organism>
    <name type="scientific">Hordeum vulgare</name>
    <name type="common">Barley</name>
    <dbReference type="NCBI Taxonomy" id="4513"/>
    <lineage>
        <taxon>Eukaryota</taxon>
        <taxon>Viridiplantae</taxon>
        <taxon>Streptophyta</taxon>
        <taxon>Embryophyta</taxon>
        <taxon>Tracheophyta</taxon>
        <taxon>Spermatophyta</taxon>
        <taxon>Magnoliopsida</taxon>
        <taxon>Liliopsida</taxon>
        <taxon>Poales</taxon>
        <taxon>Poaceae</taxon>
        <taxon>BOP clade</taxon>
        <taxon>Pooideae</taxon>
        <taxon>Triticodae</taxon>
        <taxon>Triticeae</taxon>
        <taxon>Hordeinae</taxon>
        <taxon>Hordeum</taxon>
    </lineage>
</organism>
<sequence length="505" mass="54290">MAAPPAIPRRGLFIGGGWREPTLGRHIPVINPATEDTIGDIPAATAEDVELAVAAGGPVLARRREPWARASGATRAKYLNAIAAKITGKIAYLALLETVDSGKPKDEAVADMDDVAACFEYYAALAEALDGKQHAPISLPMEEFKTYVLKEPIGVVGLITPWNYPLLMATWKVAPALAAGCTAVLKPSELASLTCLELGAICEEIGLPSGVLNIITGLGPDAGAPIASHPHVDKIAFTGSTATGKTIMTAAAQMVKPVSLELGGKSPLVTFDDVADIDKAVEWPMLGCFFNGGQVCSATSRLLLHEKIAEPFLDRLVEWAKNIKISDPLEEGCRLGSVISKGQYEQIKKFISTARSEGATILHGGDRPKHLGKGFFIEPTINTGVSTSMQIWREEVFGPVICVKVFKTESEAVELANDTHYGLAGGVISDDLERCERIAKVIHSGIVWKNCSQPTLVQAPWGGNKRSGFGRELGEWGLENYLSVKQVTRYCKDELYGWYQRPSKL</sequence>
<protein>
    <recommendedName>
        <fullName>Betaine aldehyde dehydrogenase</fullName>
        <shortName>BADH</shortName>
        <ecNumber>1.2.1.8</ecNumber>
    </recommendedName>
</protein>
<name>BADH_HORVU</name>
<accession>Q40024</accession>
<proteinExistence type="evidence at transcript level"/>
<evidence type="ECO:0000250" key="1"/>
<evidence type="ECO:0000255" key="2"/>
<evidence type="ECO:0000255" key="3">
    <source>
        <dbReference type="PROSITE-ProRule" id="PRU10007"/>
    </source>
</evidence>
<evidence type="ECO:0000255" key="4">
    <source>
        <dbReference type="PROSITE-ProRule" id="PRU10008"/>
    </source>
</evidence>
<evidence type="ECO:0000305" key="5"/>
<keyword id="KW-0520">NAD</keyword>
<keyword id="KW-0560">Oxidoreductase</keyword>
<keyword id="KW-0576">Peroxisome</keyword>
<dbReference type="EC" id="1.2.1.8"/>
<dbReference type="EMBL" id="D26448">
    <property type="protein sequence ID" value="BAA05466.1"/>
    <property type="molecule type" value="mRNA"/>
</dbReference>
<dbReference type="PIR" id="S71413">
    <property type="entry name" value="S71413"/>
</dbReference>
<dbReference type="SMR" id="Q40024"/>
<dbReference type="BioCyc" id="MetaCyc:MONOMER-16787"/>
<dbReference type="UniPathway" id="UPA00529">
    <property type="reaction ID" value="UER00386"/>
</dbReference>
<dbReference type="ExpressionAtlas" id="Q40024">
    <property type="expression patterns" value="baseline and differential"/>
</dbReference>
<dbReference type="GO" id="GO:0005777">
    <property type="term" value="C:peroxisome"/>
    <property type="evidence" value="ECO:0007669"/>
    <property type="project" value="UniProtKB-SubCell"/>
</dbReference>
<dbReference type="GO" id="GO:0008802">
    <property type="term" value="F:betaine-aldehyde dehydrogenase (NAD+) activity"/>
    <property type="evidence" value="ECO:0007669"/>
    <property type="project" value="UniProtKB-EC"/>
</dbReference>
<dbReference type="GO" id="GO:0019285">
    <property type="term" value="P:glycine betaine biosynthetic process from choline"/>
    <property type="evidence" value="ECO:0007669"/>
    <property type="project" value="UniProtKB-UniPathway"/>
</dbReference>
<dbReference type="CDD" id="cd07110">
    <property type="entry name" value="ALDH_F10_BADH"/>
    <property type="match status" value="1"/>
</dbReference>
<dbReference type="FunFam" id="3.40.309.10:FF:000012">
    <property type="entry name" value="Betaine aldehyde dehydrogenase"/>
    <property type="match status" value="1"/>
</dbReference>
<dbReference type="FunFam" id="3.40.605.10:FF:000007">
    <property type="entry name" value="NAD/NADP-dependent betaine aldehyde dehydrogenase"/>
    <property type="match status" value="1"/>
</dbReference>
<dbReference type="Gene3D" id="3.40.605.10">
    <property type="entry name" value="Aldehyde Dehydrogenase, Chain A, domain 1"/>
    <property type="match status" value="1"/>
</dbReference>
<dbReference type="Gene3D" id="3.40.309.10">
    <property type="entry name" value="Aldehyde Dehydrogenase, Chain A, domain 2"/>
    <property type="match status" value="1"/>
</dbReference>
<dbReference type="InterPro" id="IPR016161">
    <property type="entry name" value="Ald_DH/histidinol_DH"/>
</dbReference>
<dbReference type="InterPro" id="IPR016163">
    <property type="entry name" value="Ald_DH_C"/>
</dbReference>
<dbReference type="InterPro" id="IPR016160">
    <property type="entry name" value="Ald_DH_CS_CYS"/>
</dbReference>
<dbReference type="InterPro" id="IPR029510">
    <property type="entry name" value="Ald_DH_CS_GLU"/>
</dbReference>
<dbReference type="InterPro" id="IPR016162">
    <property type="entry name" value="Ald_DH_N"/>
</dbReference>
<dbReference type="InterPro" id="IPR015590">
    <property type="entry name" value="Aldehyde_DH_dom"/>
</dbReference>
<dbReference type="PANTHER" id="PTHR43860">
    <property type="entry name" value="BETAINE ALDEHYDE DEHYDROGENASE"/>
    <property type="match status" value="1"/>
</dbReference>
<dbReference type="PANTHER" id="PTHR43860:SF7">
    <property type="entry name" value="BETAINE ALDEHYDE DEHYDROGENASE 1"/>
    <property type="match status" value="1"/>
</dbReference>
<dbReference type="Pfam" id="PF00171">
    <property type="entry name" value="Aldedh"/>
    <property type="match status" value="1"/>
</dbReference>
<dbReference type="SUPFAM" id="SSF53720">
    <property type="entry name" value="ALDH-like"/>
    <property type="match status" value="1"/>
</dbReference>
<dbReference type="PROSITE" id="PS00070">
    <property type="entry name" value="ALDEHYDE_DEHYDR_CYS"/>
    <property type="match status" value="1"/>
</dbReference>
<dbReference type="PROSITE" id="PS00687">
    <property type="entry name" value="ALDEHYDE_DEHYDR_GLU"/>
    <property type="match status" value="1"/>
</dbReference>
<feature type="chain" id="PRO_0000056529" description="Betaine aldehyde dehydrogenase">
    <location>
        <begin position="1"/>
        <end position="505"/>
    </location>
</feature>
<feature type="short sequence motif" description="Microbody targeting signal" evidence="2">
    <location>
        <begin position="503"/>
        <end position="505"/>
    </location>
</feature>
<feature type="active site" description="Proton acceptor" evidence="3 4">
    <location>
        <position position="261"/>
    </location>
</feature>
<feature type="active site" description="Nucleophile" evidence="3 4">
    <location>
        <position position="296"/>
    </location>
</feature>
<feature type="binding site" evidence="1">
    <location>
        <begin position="239"/>
        <end position="244"/>
    </location>
    <ligand>
        <name>NAD(+)</name>
        <dbReference type="ChEBI" id="CHEBI:57540"/>
    </ligand>
</feature>
<feature type="site" description="Transition state stabilizer" evidence="1">
    <location>
        <position position="163"/>
    </location>
</feature>
<reference key="1">
    <citation type="journal article" date="1995" name="Plant Mol. Biol.">
        <title>Expression of the betaine aldehyde dehydrogenase gene in barley in response to osmotic stress and abscisic acid.</title>
        <authorList>
            <person name="Ishitani M."/>
            <person name="Nakamura T."/>
            <person name="Han S.Y."/>
            <person name="Takabe T."/>
        </authorList>
    </citation>
    <scope>NUCLEOTIDE SEQUENCE [MRNA]</scope>
</reference>